<proteinExistence type="inferred from homology"/>
<reference key="1">
    <citation type="journal article" date="2002" name="J. Gen. Virol.">
        <title>Genotype H: a new Amerindian genotype of hepatitis B virus revealed in Central America.</title>
        <authorList>
            <person name="Arauz-Ruiz P."/>
            <person name="Norder H."/>
            <person name="Robertson B.H."/>
            <person name="Magnius L.O."/>
        </authorList>
    </citation>
    <scope>NUCLEOTIDE SEQUENCE [GENOMIC DNA]</scope>
</reference>
<reference key="2">
    <citation type="journal article" date="2004" name="J. Virol.">
        <title>The enigmatic X gene of hepatitis B virus.</title>
        <authorList>
            <person name="Bouchard M.J."/>
            <person name="Schneider R.J."/>
        </authorList>
    </citation>
    <scope>REVIEW</scope>
</reference>
<reference key="3">
    <citation type="journal article" date="2006" name="Cancer Sci.">
        <title>Molecular functions and biological roles of hepatitis B virus x protein.</title>
        <authorList>
            <person name="Tang H."/>
            <person name="Oishi N."/>
            <person name="Kaneko S."/>
            <person name="Murakami S."/>
        </authorList>
    </citation>
    <scope>REVIEW</scope>
</reference>
<dbReference type="EMBL" id="AY090454">
    <property type="protein sequence ID" value="AAM09038.1"/>
    <property type="molecule type" value="Genomic_DNA"/>
</dbReference>
<dbReference type="SMR" id="Q8JN06"/>
<dbReference type="Proteomes" id="UP000001182">
    <property type="component" value="Segment"/>
</dbReference>
<dbReference type="GO" id="GO:0033650">
    <property type="term" value="C:host cell mitochondrion"/>
    <property type="evidence" value="ECO:0007669"/>
    <property type="project" value="UniProtKB-SubCell"/>
</dbReference>
<dbReference type="GO" id="GO:0042025">
    <property type="term" value="C:host cell nucleus"/>
    <property type="evidence" value="ECO:0007669"/>
    <property type="project" value="UniProtKB-SubCell"/>
</dbReference>
<dbReference type="GO" id="GO:0006351">
    <property type="term" value="P:DNA-templated transcription"/>
    <property type="evidence" value="ECO:0007669"/>
    <property type="project" value="UniProtKB-UniRule"/>
</dbReference>
<dbReference type="GO" id="GO:0085033">
    <property type="term" value="P:symbiont-mediated activation of host NF-kappaB cascade"/>
    <property type="evidence" value="ECO:0007669"/>
    <property type="project" value="UniProtKB-UniRule"/>
</dbReference>
<dbReference type="GO" id="GO:0039592">
    <property type="term" value="P:symbiont-mediated arrest of host cell cycle during G2/M transition"/>
    <property type="evidence" value="ECO:0007669"/>
    <property type="project" value="UniProtKB-UniRule"/>
</dbReference>
<dbReference type="GO" id="GO:0019079">
    <property type="term" value="P:viral genome replication"/>
    <property type="evidence" value="ECO:0007669"/>
    <property type="project" value="UniProtKB-UniRule"/>
</dbReference>
<dbReference type="HAMAP" id="MF_04074">
    <property type="entry name" value="HBV_X"/>
    <property type="match status" value="1"/>
</dbReference>
<dbReference type="InterPro" id="IPR000236">
    <property type="entry name" value="Transactivation_prot_X"/>
</dbReference>
<dbReference type="Pfam" id="PF00739">
    <property type="entry name" value="X"/>
    <property type="match status" value="1"/>
</dbReference>
<sequence>MAARLCCQLDPARDVLCLRPVGAESCGRPLSWSPGALPPPSPPSVPADDRAHLSLRGLPACAFSSAGPCALRFTSARRMETTVNAPQSLPTPLHKRTLGLSPRSTTWIEEYIKDCVFKDWEESGEELRLKVFVLGGCRHKLVCSPAPCNFFTSA</sequence>
<feature type="chain" id="PRO_0000319923" description="Protein X">
    <location>
        <begin position="1"/>
        <end position="154"/>
    </location>
</feature>
<feature type="region of interest" description="Mitochondrial targeting sequence" evidence="1">
    <location>
        <begin position="68"/>
        <end position="117"/>
    </location>
</feature>
<name>X_HBVH2</name>
<organismHost>
    <name type="scientific">Homo sapiens</name>
    <name type="common">Human</name>
    <dbReference type="NCBI Taxonomy" id="9606"/>
</organismHost>
<organismHost>
    <name type="scientific">Pan troglodytes</name>
    <name type="common">Chimpanzee</name>
    <dbReference type="NCBI Taxonomy" id="9598"/>
</organismHost>
<organism>
    <name type="scientific">Hepatitis B virus genotype H subtype adw4 (isolate Nicaragua/1853Nic/1997)</name>
    <name type="common">HBV-H</name>
    <dbReference type="NCBI Taxonomy" id="489540"/>
    <lineage>
        <taxon>Viruses</taxon>
        <taxon>Riboviria</taxon>
        <taxon>Pararnavirae</taxon>
        <taxon>Artverviricota</taxon>
        <taxon>Revtraviricetes</taxon>
        <taxon>Blubervirales</taxon>
        <taxon>Hepadnaviridae</taxon>
        <taxon>Orthohepadnavirus</taxon>
        <taxon>Hepatitis B virus</taxon>
        <taxon>hepatitis B virus genotype H</taxon>
    </lineage>
</organism>
<comment type="function">
    <text evidence="1">Multifunctional protein that plays a role in silencing host antiviral defenses and promoting viral transcription. Does not seem to be essential for HBV infection. May be directly involved in development of cirrhosis and liver cancer (hepatocellular carcinoma). Most of cytosolic activities involve modulation of cytosolic calcium. The effect on apoptosis is controversial depending on the cell types in which the studies have been conducted. May induce apoptosis by localizing in mitochondria and causing loss of mitochondrial membrane potential. May also modulate apoptosis by binding host CFLAR, a key regulator of the death-inducing signaling complex (DISC). Promotes viral transcription by using the host E3 ubiquitin ligase DDB1 to target the SMC5-SMC6 complex to proteasomal degradation. This host complex would otherwise bind to viral episomal DNA, and prevents its transcription. Moderately stimulates transcription of many different viral and cellular transcription elements. Promoters and enhancers stimulated by HBx contain DNA binding sites for NF-kappa-B, AP-1, AP-2, c-EBP, ATF/CREB, or the calcium-activated factor NF-AT.</text>
</comment>
<comment type="subunit">
    <text evidence="1">May form homodimer. May interact with host CEBPA, CFLAR, CREB1, DDB1, E4F1, HBXIP, HSPD1/HSP60, NFKBIA, POLR2E and SMAD4. Interacts with host SMC5-SMC6 complex and induces its degradation. Interacts with host TRPC4AP; leading to prevent ubiquitination of TRPC4AP. Interacts with host PLSCR1; this interaction promotes ubiquitination and degradation of HBx and impairs HBx-mediated cell proliferation.</text>
</comment>
<comment type="subcellular location">
    <subcellularLocation>
        <location evidence="1">Host cytoplasm</location>
    </subcellularLocation>
    <subcellularLocation>
        <location evidence="1">Host nucleus</location>
    </subcellularLocation>
    <subcellularLocation>
        <location evidence="1">Host mitochondrion</location>
    </subcellularLocation>
    <text evidence="1">Mainly cytoplasmic as only a fraction is detected in the nucleus. In cytoplasm, a minor fraction associates with mitochondria or proteasomes.</text>
</comment>
<comment type="PTM">
    <text evidence="1">A fraction may be phosphorylated in insect cells and HepG2 cells, a human hepatoblastoma cell line. Phosphorylated in vitro by host protein kinase C or mitogen-activated protein kinase. N-acetylated in insect cells.</text>
</comment>
<comment type="similarity">
    <text evidence="1">Belongs to the orthohepadnavirus protein X family.</text>
</comment>
<comment type="caution">
    <text>Transcriptional activities should be taken with a grain of salt. As of 2007, all studies demonstrating in vivo interaction between protein X and transcriptional components were performed with significant overexpression of both proteins and in the absence of viral infection.</text>
</comment>
<protein>
    <recommendedName>
        <fullName evidence="1">Protein X</fullName>
    </recommendedName>
    <alternativeName>
        <fullName evidence="1">HBx</fullName>
    </alternativeName>
    <alternativeName>
        <fullName evidence="1">Peptide X</fullName>
    </alternativeName>
    <alternativeName>
        <fullName evidence="1">pX</fullName>
    </alternativeName>
</protein>
<gene>
    <name evidence="1" type="primary">X</name>
</gene>
<keyword id="KW-1074">Activation of host NF-kappa-B by virus</keyword>
<keyword id="KW-0010">Activator</keyword>
<keyword id="KW-0053">Apoptosis</keyword>
<keyword id="KW-1035">Host cytoplasm</keyword>
<keyword id="KW-1079">Host G2/M cell cycle arrest by virus</keyword>
<keyword id="KW-1045">Host mitochondrion</keyword>
<keyword id="KW-1048">Host nucleus</keyword>
<keyword id="KW-0945">Host-virus interaction</keyword>
<keyword id="KW-1121">Modulation of host cell cycle by virus</keyword>
<keyword id="KW-0804">Transcription</keyword>
<keyword id="KW-0805">Transcription regulation</keyword>
<accession>Q8JN06</accession>
<evidence type="ECO:0000255" key="1">
    <source>
        <dbReference type="HAMAP-Rule" id="MF_04074"/>
    </source>
</evidence>